<name>Y2239_ARATH</name>
<proteinExistence type="evidence at protein level"/>
<comment type="catalytic activity">
    <reaction>
        <text>L-seryl-[protein] + ATP = O-phospho-L-seryl-[protein] + ADP + H(+)</text>
        <dbReference type="Rhea" id="RHEA:17989"/>
        <dbReference type="Rhea" id="RHEA-COMP:9863"/>
        <dbReference type="Rhea" id="RHEA-COMP:11604"/>
        <dbReference type="ChEBI" id="CHEBI:15378"/>
        <dbReference type="ChEBI" id="CHEBI:29999"/>
        <dbReference type="ChEBI" id="CHEBI:30616"/>
        <dbReference type="ChEBI" id="CHEBI:83421"/>
        <dbReference type="ChEBI" id="CHEBI:456216"/>
        <dbReference type="EC" id="2.7.11.1"/>
    </reaction>
</comment>
<comment type="catalytic activity">
    <reaction>
        <text>L-threonyl-[protein] + ATP = O-phospho-L-threonyl-[protein] + ADP + H(+)</text>
        <dbReference type="Rhea" id="RHEA:46608"/>
        <dbReference type="Rhea" id="RHEA-COMP:11060"/>
        <dbReference type="Rhea" id="RHEA-COMP:11605"/>
        <dbReference type="ChEBI" id="CHEBI:15378"/>
        <dbReference type="ChEBI" id="CHEBI:30013"/>
        <dbReference type="ChEBI" id="CHEBI:30616"/>
        <dbReference type="ChEBI" id="CHEBI:61977"/>
        <dbReference type="ChEBI" id="CHEBI:456216"/>
        <dbReference type="EC" id="2.7.11.1"/>
    </reaction>
</comment>
<comment type="interaction">
    <interactant intactId="EBI-20655099">
        <id>Q0WVM4</id>
    </interactant>
    <interactant intactId="EBI-20652336">
        <id>A0A178WLG7</id>
        <label>At1g51790</label>
    </interactant>
    <organismsDiffer>false</organismsDiffer>
    <experiments>2</experiments>
</comment>
<comment type="interaction">
    <interactant intactId="EBI-20655099">
        <id>Q0WVM4</id>
    </interactant>
    <interactant intactId="EBI-20657656">
        <id>C0LGH8</id>
        <label>At1g63430</label>
    </interactant>
    <organismsDiffer>false</organismsDiffer>
    <experiments>3</experiments>
</comment>
<comment type="interaction">
    <interactant intactId="EBI-20655099">
        <id>Q0WVM4</id>
    </interactant>
    <interactant intactId="EBI-16955712">
        <id>Q9C7T7</id>
        <label>CEPR2</label>
    </interactant>
    <organismsDiffer>false</organismsDiffer>
    <experiments>2</experiments>
</comment>
<comment type="interaction">
    <interactant intactId="EBI-20655099">
        <id>Q0WVM4</id>
    </interactant>
    <interactant intactId="EBI-20662530">
        <id>O22178</id>
        <label>LRR-RLK</label>
    </interactant>
    <organismsDiffer>false</organismsDiffer>
    <experiments>2</experiments>
</comment>
<comment type="interaction">
    <interactant intactId="EBI-20655099">
        <id>Q0WVM4</id>
    </interactant>
    <interactant intactId="EBI-16941202">
        <id>Q6R2J8</id>
        <label>SRF8</label>
    </interactant>
    <organismsDiffer>false</organismsDiffer>
    <experiments>2</experiments>
</comment>
<comment type="subcellular location">
    <subcellularLocation>
        <location evidence="7">Membrane</location>
        <topology evidence="7">Single-pass type I membrane protein</topology>
    </subcellularLocation>
</comment>
<comment type="similarity">
    <text evidence="5">Belongs to the protein kinase superfamily. Ser/Thr protein kinase family.</text>
</comment>
<comment type="sequence caution" evidence="7">
    <conflict type="erroneous gene model prediction">
        <sequence resource="EMBL-CDS" id="AAC63680"/>
    </conflict>
</comment>
<reference key="1">
    <citation type="journal article" date="1999" name="Nature">
        <title>Sequence and analysis of chromosome 2 of the plant Arabidopsis thaliana.</title>
        <authorList>
            <person name="Lin X."/>
            <person name="Kaul S."/>
            <person name="Rounsley S.D."/>
            <person name="Shea T.P."/>
            <person name="Benito M.-I."/>
            <person name="Town C.D."/>
            <person name="Fujii C.Y."/>
            <person name="Mason T.M."/>
            <person name="Bowman C.L."/>
            <person name="Barnstead M.E."/>
            <person name="Feldblyum T.V."/>
            <person name="Buell C.R."/>
            <person name="Ketchum K.A."/>
            <person name="Lee J.J."/>
            <person name="Ronning C.M."/>
            <person name="Koo H.L."/>
            <person name="Moffat K.S."/>
            <person name="Cronin L.A."/>
            <person name="Shen M."/>
            <person name="Pai G."/>
            <person name="Van Aken S."/>
            <person name="Umayam L."/>
            <person name="Tallon L.J."/>
            <person name="Gill J.E."/>
            <person name="Adams M.D."/>
            <person name="Carrera A.J."/>
            <person name="Creasy T.H."/>
            <person name="Goodman H.M."/>
            <person name="Somerville C.R."/>
            <person name="Copenhaver G.P."/>
            <person name="Preuss D."/>
            <person name="Nierman W.C."/>
            <person name="White O."/>
            <person name="Eisen J.A."/>
            <person name="Salzberg S.L."/>
            <person name="Fraser C.M."/>
            <person name="Venter J.C."/>
        </authorList>
    </citation>
    <scope>NUCLEOTIDE SEQUENCE [LARGE SCALE GENOMIC DNA]</scope>
    <source>
        <strain>cv. Columbia</strain>
    </source>
</reference>
<reference key="2">
    <citation type="journal article" date="2017" name="Plant J.">
        <title>Araport11: a complete reannotation of the Arabidopsis thaliana reference genome.</title>
        <authorList>
            <person name="Cheng C.Y."/>
            <person name="Krishnakumar V."/>
            <person name="Chan A.P."/>
            <person name="Thibaud-Nissen F."/>
            <person name="Schobel S."/>
            <person name="Town C.D."/>
        </authorList>
    </citation>
    <scope>GENOME REANNOTATION</scope>
    <source>
        <strain>cv. Columbia</strain>
    </source>
</reference>
<reference key="3">
    <citation type="submission" date="2006-07" db="EMBL/GenBank/DDBJ databases">
        <title>Large-scale analysis of RIKEN Arabidopsis full-length (RAFL) cDNAs.</title>
        <authorList>
            <person name="Totoki Y."/>
            <person name="Seki M."/>
            <person name="Ishida J."/>
            <person name="Nakajima M."/>
            <person name="Enju A."/>
            <person name="Kamiya A."/>
            <person name="Narusaka M."/>
            <person name="Shin-i T."/>
            <person name="Nakagawa M."/>
            <person name="Sakamoto N."/>
            <person name="Oishi K."/>
            <person name="Kohara Y."/>
            <person name="Kobayashi M."/>
            <person name="Toyoda A."/>
            <person name="Sakaki Y."/>
            <person name="Sakurai T."/>
            <person name="Iida K."/>
            <person name="Akiyama K."/>
            <person name="Satou M."/>
            <person name="Toyoda T."/>
            <person name="Konagaya A."/>
            <person name="Carninci P."/>
            <person name="Kawai J."/>
            <person name="Hayashizaki Y."/>
            <person name="Shinozaki K."/>
        </authorList>
    </citation>
    <scope>NUCLEOTIDE SEQUENCE [LARGE SCALE MRNA]</scope>
    <source>
        <strain>cv. Columbia</strain>
    </source>
</reference>
<reference key="4">
    <citation type="journal article" date="2010" name="BMC Genomics">
        <title>Genome-wide cloning and sequence analysis of leucine-rich repeat receptor-like protein kinase genes in Arabidopsis thaliana.</title>
        <authorList>
            <person name="Gou X."/>
            <person name="He K."/>
            <person name="Yang H."/>
            <person name="Yuan T."/>
            <person name="Lin H."/>
            <person name="Clouse S.D."/>
            <person name="Li J."/>
        </authorList>
    </citation>
    <scope>NUCLEOTIDE SEQUENCE [LARGE SCALE MRNA]</scope>
    <source>
        <strain>cv. Columbia</strain>
    </source>
</reference>
<feature type="signal peptide" evidence="4">
    <location>
        <begin position="1"/>
        <end position="27"/>
    </location>
</feature>
<feature type="chain" id="PRO_0000387547" description="Probable LRR receptor-like serine/threonine-protein kinase At2g23950">
    <location>
        <begin position="28"/>
        <end position="634"/>
    </location>
</feature>
<feature type="topological domain" description="Extracellular" evidence="4">
    <location>
        <begin position="28"/>
        <end position="236"/>
    </location>
</feature>
<feature type="transmembrane region" description="Helical" evidence="4">
    <location>
        <begin position="237"/>
        <end position="257"/>
    </location>
</feature>
<feature type="topological domain" description="Cytoplasmic" evidence="4">
    <location>
        <begin position="258"/>
        <end position="634"/>
    </location>
</feature>
<feature type="repeat" description="LRR 1">
    <location>
        <begin position="99"/>
        <end position="121"/>
    </location>
</feature>
<feature type="repeat" description="LRR 2">
    <location>
        <begin position="123"/>
        <end position="145"/>
    </location>
</feature>
<feature type="repeat" description="LRR 3">
    <location>
        <begin position="147"/>
        <end position="167"/>
    </location>
</feature>
<feature type="repeat" description="LRR 4">
    <location>
        <begin position="171"/>
        <end position="193"/>
    </location>
</feature>
<feature type="domain" description="Protein kinase" evidence="5">
    <location>
        <begin position="299"/>
        <end position="554"/>
    </location>
</feature>
<feature type="active site" description="Proton acceptor" evidence="5 6">
    <location>
        <position position="422"/>
    </location>
</feature>
<feature type="binding site" evidence="5">
    <location>
        <begin position="305"/>
        <end position="313"/>
    </location>
    <ligand>
        <name>ATP</name>
        <dbReference type="ChEBI" id="CHEBI:30616"/>
    </ligand>
</feature>
<feature type="binding site" evidence="5">
    <location>
        <position position="327"/>
    </location>
    <ligand>
        <name>ATP</name>
        <dbReference type="ChEBI" id="CHEBI:30616"/>
    </ligand>
</feature>
<feature type="modified residue" description="Phosphothreonine" evidence="3">
    <location>
        <position position="296"/>
    </location>
</feature>
<feature type="modified residue" description="Phosphothreonine" evidence="2">
    <location>
        <position position="322"/>
    </location>
</feature>
<feature type="modified residue" description="Phosphoserine" evidence="1">
    <location>
        <position position="380"/>
    </location>
</feature>
<feature type="modified residue" description="Phosphoserine" evidence="3">
    <location>
        <position position="383"/>
    </location>
</feature>
<feature type="modified residue" description="Phosphothreonine" evidence="1">
    <location>
        <position position="395"/>
    </location>
</feature>
<feature type="modified residue" description="Phosphothreonine" evidence="2">
    <location>
        <position position="455"/>
    </location>
</feature>
<feature type="modified residue" description="Phosphothreonine" evidence="2">
    <location>
        <position position="456"/>
    </location>
</feature>
<feature type="modified residue" description="Phosphothreonine" evidence="2">
    <location>
        <position position="461"/>
    </location>
</feature>
<feature type="modified residue" description="Phosphotyrosine" evidence="1">
    <location>
        <position position="469"/>
    </location>
</feature>
<feature type="modified residue" description="Phosphoserine" evidence="1">
    <location>
        <position position="471"/>
    </location>
</feature>
<feature type="modified residue" description="Phosphothreonine" evidence="1">
    <location>
        <position position="472"/>
    </location>
</feature>
<feature type="modified residue" description="Phosphoserine" evidence="1">
    <location>
        <position position="476"/>
    </location>
</feature>
<feature type="modified residue" description="Phosphothreonine" evidence="1">
    <location>
        <position position="551"/>
    </location>
</feature>
<feature type="glycosylation site" description="N-linked (GlcNAc...) asparagine" evidence="4">
    <location>
        <position position="96"/>
    </location>
</feature>
<feature type="glycosylation site" description="N-linked (GlcNAc...) asparagine" evidence="4">
    <location>
        <position position="109"/>
    </location>
</feature>
<feature type="glycosylation site" description="N-linked (GlcNAc...) asparagine" evidence="4">
    <location>
        <position position="155"/>
    </location>
</feature>
<accession>Q0WVM4</accession>
<accession>O82223</accession>
<accession>Q570Q6</accession>
<keyword id="KW-0067">ATP-binding</keyword>
<keyword id="KW-0325">Glycoprotein</keyword>
<keyword id="KW-0418">Kinase</keyword>
<keyword id="KW-0433">Leucine-rich repeat</keyword>
<keyword id="KW-0472">Membrane</keyword>
<keyword id="KW-0547">Nucleotide-binding</keyword>
<keyword id="KW-0597">Phosphoprotein</keyword>
<keyword id="KW-0675">Receptor</keyword>
<keyword id="KW-1185">Reference proteome</keyword>
<keyword id="KW-0677">Repeat</keyword>
<keyword id="KW-0723">Serine/threonine-protein kinase</keyword>
<keyword id="KW-0732">Signal</keyword>
<keyword id="KW-0808">Transferase</keyword>
<keyword id="KW-0812">Transmembrane</keyword>
<keyword id="KW-1133">Transmembrane helix</keyword>
<organism>
    <name type="scientific">Arabidopsis thaliana</name>
    <name type="common">Mouse-ear cress</name>
    <dbReference type="NCBI Taxonomy" id="3702"/>
    <lineage>
        <taxon>Eukaryota</taxon>
        <taxon>Viridiplantae</taxon>
        <taxon>Streptophyta</taxon>
        <taxon>Embryophyta</taxon>
        <taxon>Tracheophyta</taxon>
        <taxon>Spermatophyta</taxon>
        <taxon>Magnoliopsida</taxon>
        <taxon>eudicotyledons</taxon>
        <taxon>Gunneridae</taxon>
        <taxon>Pentapetalae</taxon>
        <taxon>rosids</taxon>
        <taxon>malvids</taxon>
        <taxon>Brassicales</taxon>
        <taxon>Brassicaceae</taxon>
        <taxon>Camelineae</taxon>
        <taxon>Arabidopsis</taxon>
    </lineage>
</organism>
<evidence type="ECO:0000250" key="1">
    <source>
        <dbReference type="UniProtKB" id="Q94AG2"/>
    </source>
</evidence>
<evidence type="ECO:0000250" key="2">
    <source>
        <dbReference type="UniProtKB" id="Q94F62"/>
    </source>
</evidence>
<evidence type="ECO:0000250" key="3">
    <source>
        <dbReference type="UniProtKB" id="Q9LSI9"/>
    </source>
</evidence>
<evidence type="ECO:0000255" key="4"/>
<evidence type="ECO:0000255" key="5">
    <source>
        <dbReference type="PROSITE-ProRule" id="PRU00159"/>
    </source>
</evidence>
<evidence type="ECO:0000255" key="6">
    <source>
        <dbReference type="PROSITE-ProRule" id="PRU10027"/>
    </source>
</evidence>
<evidence type="ECO:0000305" key="7"/>
<gene>
    <name type="ordered locus">At2g23950</name>
    <name type="ORF">T29E15.15</name>
</gene>
<sequence length="634" mass="69694">MVVMKLITMKIFSVLLLLCFFVTCSLSSEPRNPEVEALINIKNELHDPHGVFKNWDEFSVDPCSWTMISCSSDNLVIGLGAPSQSLSGTLSGSIGNLTNLRQVSLQNNNISGKIPPEICSLPKLQTLDLSNNRFSGEIPGSVNQLSNLQYLRLNNNSLSGPFPASLSQIPHLSFLDLSYNNLRGPVPKFPARTFNVAGNPLICKNSLPEICSGSISASPLSVSLRSSSGRRTNILAVALGVSLGFAVSVILSLGFIWYRKKQRRLTMLRISDKQEEGLLGLGNLRSFTFRELHVATDGFSSKSILGAGGFGNVYRGKFGDGTVVAVKRLKDVNGTSGNSQFRTELEMISLAVHRNLLRLIGYCASSSERLLVYPYMSNGSVASRLKAKPALDWNTRKKIAIGAARGLFYLHEQCDPKIIHRDVKAANILLDEYFEAVVGDFGLAKLLNHEDSHVTTAVRGTVGHIAPEYLSTGQSSEKTDVFGFGILLLELITGMRALEFGKSVSQKGAMLEWVRKLHKEMKVEELVDRELGTTYDRIEVGEMLQVALLCTQFLPAHRPKMSEVVQMLEGDGLAERWAASHDHSHFYHANMSYRTITSTDGNNQTKHLFGSSGFEDEDDNQALDSFAMELSGPR</sequence>
<dbReference type="EC" id="2.7.11.1"/>
<dbReference type="EMBL" id="AC005170">
    <property type="protein sequence ID" value="AAC63680.1"/>
    <property type="status" value="ALT_SEQ"/>
    <property type="molecule type" value="Genomic_DNA"/>
</dbReference>
<dbReference type="EMBL" id="CP002685">
    <property type="protein sequence ID" value="AEC07507.1"/>
    <property type="molecule type" value="Genomic_DNA"/>
</dbReference>
<dbReference type="EMBL" id="AK220652">
    <property type="protein sequence ID" value="BAD95153.1"/>
    <property type="molecule type" value="mRNA"/>
</dbReference>
<dbReference type="EMBL" id="AK226719">
    <property type="protein sequence ID" value="BAE98824.1"/>
    <property type="molecule type" value="mRNA"/>
</dbReference>
<dbReference type="EMBL" id="FJ708698">
    <property type="protein sequence ID" value="ACN59293.1"/>
    <property type="molecule type" value="mRNA"/>
</dbReference>
<dbReference type="PIR" id="G84630">
    <property type="entry name" value="G84630"/>
</dbReference>
<dbReference type="RefSeq" id="NP_179973.2">
    <property type="nucleotide sequence ID" value="NM_127957.5"/>
</dbReference>
<dbReference type="SMR" id="Q0WVM4"/>
<dbReference type="BioGRID" id="2280">
    <property type="interactions" value="47"/>
</dbReference>
<dbReference type="FunCoup" id="Q0WVM4">
    <property type="interactions" value="139"/>
</dbReference>
<dbReference type="IntAct" id="Q0WVM4">
    <property type="interactions" value="49"/>
</dbReference>
<dbReference type="STRING" id="3702.Q0WVM4"/>
<dbReference type="GlyGen" id="Q0WVM4">
    <property type="glycosylation" value="3 sites"/>
</dbReference>
<dbReference type="PaxDb" id="3702-AT2G23950.1"/>
<dbReference type="ProteomicsDB" id="243099"/>
<dbReference type="EnsemblPlants" id="AT2G23950.1">
    <property type="protein sequence ID" value="AT2G23950.1"/>
    <property type="gene ID" value="AT2G23950"/>
</dbReference>
<dbReference type="GeneID" id="816928"/>
<dbReference type="Gramene" id="AT2G23950.1">
    <property type="protein sequence ID" value="AT2G23950.1"/>
    <property type="gene ID" value="AT2G23950"/>
</dbReference>
<dbReference type="KEGG" id="ath:AT2G23950"/>
<dbReference type="Araport" id="AT2G23950"/>
<dbReference type="TAIR" id="AT2G23950">
    <property type="gene designation" value="CLERK"/>
</dbReference>
<dbReference type="eggNOG" id="ENOG502QQXY">
    <property type="taxonomic scope" value="Eukaryota"/>
</dbReference>
<dbReference type="HOGENOM" id="CLU_000288_92_7_1"/>
<dbReference type="InParanoid" id="Q0WVM4"/>
<dbReference type="OMA" id="DACSWAM"/>
<dbReference type="OrthoDB" id="749055at2759"/>
<dbReference type="PhylomeDB" id="Q0WVM4"/>
<dbReference type="PRO" id="PR:Q0WVM4"/>
<dbReference type="Proteomes" id="UP000006548">
    <property type="component" value="Chromosome 2"/>
</dbReference>
<dbReference type="ExpressionAtlas" id="Q0WVM4">
    <property type="expression patterns" value="baseline and differential"/>
</dbReference>
<dbReference type="GO" id="GO:0016020">
    <property type="term" value="C:membrane"/>
    <property type="evidence" value="ECO:0007669"/>
    <property type="project" value="UniProtKB-SubCell"/>
</dbReference>
<dbReference type="GO" id="GO:0005524">
    <property type="term" value="F:ATP binding"/>
    <property type="evidence" value="ECO:0007669"/>
    <property type="project" value="UniProtKB-KW"/>
</dbReference>
<dbReference type="GO" id="GO:0015026">
    <property type="term" value="F:coreceptor activity"/>
    <property type="evidence" value="ECO:0000316"/>
    <property type="project" value="TAIR"/>
</dbReference>
<dbReference type="GO" id="GO:0106310">
    <property type="term" value="F:protein serine kinase activity"/>
    <property type="evidence" value="ECO:0007669"/>
    <property type="project" value="RHEA"/>
</dbReference>
<dbReference type="GO" id="GO:0004674">
    <property type="term" value="F:protein serine/threonine kinase activity"/>
    <property type="evidence" value="ECO:0007669"/>
    <property type="project" value="UniProtKB-KW"/>
</dbReference>
<dbReference type="GO" id="GO:0048653">
    <property type="term" value="P:anther development"/>
    <property type="evidence" value="ECO:0000316"/>
    <property type="project" value="TAIR"/>
</dbReference>
<dbReference type="GO" id="GO:1901653">
    <property type="term" value="P:cellular response to peptide"/>
    <property type="evidence" value="ECO:0000315"/>
    <property type="project" value="TAIR"/>
</dbReference>
<dbReference type="GO" id="GO:0007639">
    <property type="term" value="P:homeostasis of number of meristem cells"/>
    <property type="evidence" value="ECO:0000316"/>
    <property type="project" value="TAIR"/>
</dbReference>
<dbReference type="FunFam" id="3.80.10.10:FF:000021">
    <property type="entry name" value="Putative LRR receptor-like serine/threonine-protein kinase"/>
    <property type="match status" value="1"/>
</dbReference>
<dbReference type="FunFam" id="3.30.200.20:FF:000015">
    <property type="entry name" value="Somatic embryogenesis receptor kinase 1"/>
    <property type="match status" value="1"/>
</dbReference>
<dbReference type="FunFam" id="1.10.510.10:FF:000016">
    <property type="entry name" value="Somatic embryogenesis receptor-like kinase 1"/>
    <property type="match status" value="1"/>
</dbReference>
<dbReference type="Gene3D" id="3.30.200.20">
    <property type="entry name" value="Phosphorylase Kinase, domain 1"/>
    <property type="match status" value="1"/>
</dbReference>
<dbReference type="Gene3D" id="3.80.10.10">
    <property type="entry name" value="Ribonuclease Inhibitor"/>
    <property type="match status" value="1"/>
</dbReference>
<dbReference type="Gene3D" id="1.10.510.10">
    <property type="entry name" value="Transferase(Phosphotransferase) domain 1"/>
    <property type="match status" value="1"/>
</dbReference>
<dbReference type="InterPro" id="IPR011009">
    <property type="entry name" value="Kinase-like_dom_sf"/>
</dbReference>
<dbReference type="InterPro" id="IPR001611">
    <property type="entry name" value="Leu-rich_rpt"/>
</dbReference>
<dbReference type="InterPro" id="IPR032675">
    <property type="entry name" value="LRR_dom_sf"/>
</dbReference>
<dbReference type="InterPro" id="IPR013210">
    <property type="entry name" value="LRR_N_plant-typ"/>
</dbReference>
<dbReference type="InterPro" id="IPR055414">
    <property type="entry name" value="LRR_R13L4/SHOC2-like"/>
</dbReference>
<dbReference type="InterPro" id="IPR000719">
    <property type="entry name" value="Prot_kinase_dom"/>
</dbReference>
<dbReference type="InterPro" id="IPR017441">
    <property type="entry name" value="Protein_kinase_ATP_BS"/>
</dbReference>
<dbReference type="InterPro" id="IPR001245">
    <property type="entry name" value="Ser-Thr/Tyr_kinase_cat_dom"/>
</dbReference>
<dbReference type="InterPro" id="IPR008271">
    <property type="entry name" value="Ser/Thr_kinase_AS"/>
</dbReference>
<dbReference type="PANTHER" id="PTHR47988">
    <property type="entry name" value="SOMATIC EMBRYOGENESIS RECEPTOR KINASE 1"/>
    <property type="match status" value="1"/>
</dbReference>
<dbReference type="Pfam" id="PF23598">
    <property type="entry name" value="LRR_14"/>
    <property type="match status" value="1"/>
</dbReference>
<dbReference type="Pfam" id="PF08263">
    <property type="entry name" value="LRRNT_2"/>
    <property type="match status" value="1"/>
</dbReference>
<dbReference type="Pfam" id="PF07714">
    <property type="entry name" value="PK_Tyr_Ser-Thr"/>
    <property type="match status" value="1"/>
</dbReference>
<dbReference type="PRINTS" id="PR00019">
    <property type="entry name" value="LEURICHRPT"/>
</dbReference>
<dbReference type="SMART" id="SM00220">
    <property type="entry name" value="S_TKc"/>
    <property type="match status" value="1"/>
</dbReference>
<dbReference type="SUPFAM" id="SSF52058">
    <property type="entry name" value="L domain-like"/>
    <property type="match status" value="1"/>
</dbReference>
<dbReference type="SUPFAM" id="SSF56112">
    <property type="entry name" value="Protein kinase-like (PK-like)"/>
    <property type="match status" value="1"/>
</dbReference>
<dbReference type="PROSITE" id="PS51450">
    <property type="entry name" value="LRR"/>
    <property type="match status" value="4"/>
</dbReference>
<dbReference type="PROSITE" id="PS00107">
    <property type="entry name" value="PROTEIN_KINASE_ATP"/>
    <property type="match status" value="1"/>
</dbReference>
<dbReference type="PROSITE" id="PS50011">
    <property type="entry name" value="PROTEIN_KINASE_DOM"/>
    <property type="match status" value="1"/>
</dbReference>
<dbReference type="PROSITE" id="PS00108">
    <property type="entry name" value="PROTEIN_KINASE_ST"/>
    <property type="match status" value="1"/>
</dbReference>
<protein>
    <recommendedName>
        <fullName>Probable LRR receptor-like serine/threonine-protein kinase At2g23950</fullName>
        <ecNumber>2.7.11.1</ecNumber>
    </recommendedName>
</protein>